<proteinExistence type="inferred from homology"/>
<protein>
    <recommendedName>
        <fullName evidence="1">Small ribosomal subunit protein uS11</fullName>
    </recommendedName>
    <alternativeName>
        <fullName evidence="2">30S ribosomal protein S11</fullName>
    </alternativeName>
</protein>
<dbReference type="EMBL" id="CP000817">
    <property type="protein sequence ID" value="ACA42034.1"/>
    <property type="molecule type" value="Genomic_DNA"/>
</dbReference>
<dbReference type="RefSeq" id="WP_004233731.1">
    <property type="nucleotide sequence ID" value="NC_010382.1"/>
</dbReference>
<dbReference type="SMR" id="B1HMV6"/>
<dbReference type="EnsemblBacteria" id="ACA42034">
    <property type="protein sequence ID" value="ACA42034"/>
    <property type="gene ID" value="Bsph_4590"/>
</dbReference>
<dbReference type="GeneID" id="74907539"/>
<dbReference type="KEGG" id="lsp:Bsph_4590"/>
<dbReference type="HOGENOM" id="CLU_072439_5_0_9"/>
<dbReference type="Proteomes" id="UP000002164">
    <property type="component" value="Chromosome"/>
</dbReference>
<dbReference type="GO" id="GO:1990904">
    <property type="term" value="C:ribonucleoprotein complex"/>
    <property type="evidence" value="ECO:0007669"/>
    <property type="project" value="UniProtKB-KW"/>
</dbReference>
<dbReference type="GO" id="GO:0005840">
    <property type="term" value="C:ribosome"/>
    <property type="evidence" value="ECO:0007669"/>
    <property type="project" value="UniProtKB-KW"/>
</dbReference>
<dbReference type="GO" id="GO:0019843">
    <property type="term" value="F:rRNA binding"/>
    <property type="evidence" value="ECO:0007669"/>
    <property type="project" value="UniProtKB-UniRule"/>
</dbReference>
<dbReference type="GO" id="GO:0003735">
    <property type="term" value="F:structural constituent of ribosome"/>
    <property type="evidence" value="ECO:0007669"/>
    <property type="project" value="InterPro"/>
</dbReference>
<dbReference type="GO" id="GO:0006412">
    <property type="term" value="P:translation"/>
    <property type="evidence" value="ECO:0007669"/>
    <property type="project" value="UniProtKB-UniRule"/>
</dbReference>
<dbReference type="FunFam" id="3.30.420.80:FF:000001">
    <property type="entry name" value="30S ribosomal protein S11"/>
    <property type="match status" value="1"/>
</dbReference>
<dbReference type="Gene3D" id="3.30.420.80">
    <property type="entry name" value="Ribosomal protein S11"/>
    <property type="match status" value="1"/>
</dbReference>
<dbReference type="HAMAP" id="MF_01310">
    <property type="entry name" value="Ribosomal_uS11"/>
    <property type="match status" value="1"/>
</dbReference>
<dbReference type="InterPro" id="IPR001971">
    <property type="entry name" value="Ribosomal_uS11"/>
</dbReference>
<dbReference type="InterPro" id="IPR019981">
    <property type="entry name" value="Ribosomal_uS11_bac-type"/>
</dbReference>
<dbReference type="InterPro" id="IPR018102">
    <property type="entry name" value="Ribosomal_uS11_CS"/>
</dbReference>
<dbReference type="InterPro" id="IPR036967">
    <property type="entry name" value="Ribosomal_uS11_sf"/>
</dbReference>
<dbReference type="NCBIfam" id="NF003698">
    <property type="entry name" value="PRK05309.1"/>
    <property type="match status" value="1"/>
</dbReference>
<dbReference type="NCBIfam" id="TIGR03632">
    <property type="entry name" value="uS11_bact"/>
    <property type="match status" value="1"/>
</dbReference>
<dbReference type="PANTHER" id="PTHR11759">
    <property type="entry name" value="40S RIBOSOMAL PROTEIN S14/30S RIBOSOMAL PROTEIN S11"/>
    <property type="match status" value="1"/>
</dbReference>
<dbReference type="Pfam" id="PF00411">
    <property type="entry name" value="Ribosomal_S11"/>
    <property type="match status" value="1"/>
</dbReference>
<dbReference type="PIRSF" id="PIRSF002131">
    <property type="entry name" value="Ribosomal_S11"/>
    <property type="match status" value="1"/>
</dbReference>
<dbReference type="SUPFAM" id="SSF53137">
    <property type="entry name" value="Translational machinery components"/>
    <property type="match status" value="1"/>
</dbReference>
<dbReference type="PROSITE" id="PS00054">
    <property type="entry name" value="RIBOSOMAL_S11"/>
    <property type="match status" value="1"/>
</dbReference>
<keyword id="KW-0687">Ribonucleoprotein</keyword>
<keyword id="KW-0689">Ribosomal protein</keyword>
<keyword id="KW-0694">RNA-binding</keyword>
<keyword id="KW-0699">rRNA-binding</keyword>
<organism>
    <name type="scientific">Lysinibacillus sphaericus (strain C3-41)</name>
    <dbReference type="NCBI Taxonomy" id="444177"/>
    <lineage>
        <taxon>Bacteria</taxon>
        <taxon>Bacillati</taxon>
        <taxon>Bacillota</taxon>
        <taxon>Bacilli</taxon>
        <taxon>Bacillales</taxon>
        <taxon>Bacillaceae</taxon>
        <taxon>Lysinibacillus</taxon>
    </lineage>
</organism>
<name>RS11_LYSSC</name>
<evidence type="ECO:0000255" key="1">
    <source>
        <dbReference type="HAMAP-Rule" id="MF_01310"/>
    </source>
</evidence>
<evidence type="ECO:0000305" key="2"/>
<reference key="1">
    <citation type="journal article" date="2008" name="J. Bacteriol.">
        <title>Complete genome sequence of the mosquitocidal bacterium Bacillus sphaericus C3-41 and comparison with those of closely related Bacillus species.</title>
        <authorList>
            <person name="Hu X."/>
            <person name="Fan W."/>
            <person name="Han B."/>
            <person name="Liu H."/>
            <person name="Zheng D."/>
            <person name="Li Q."/>
            <person name="Dong W."/>
            <person name="Yan J."/>
            <person name="Gao M."/>
            <person name="Berry C."/>
            <person name="Yuan Z."/>
        </authorList>
    </citation>
    <scope>NUCLEOTIDE SEQUENCE [LARGE SCALE GENOMIC DNA]</scope>
    <source>
        <strain>C3-41</strain>
    </source>
</reference>
<gene>
    <name evidence="1" type="primary">rpsK</name>
    <name type="ordered locus">Bsph_4590</name>
</gene>
<comment type="function">
    <text evidence="1">Located on the platform of the 30S subunit, it bridges several disparate RNA helices of the 16S rRNA. Forms part of the Shine-Dalgarno cleft in the 70S ribosome.</text>
</comment>
<comment type="subunit">
    <text evidence="1">Part of the 30S ribosomal subunit. Interacts with proteins S7 and S18. Binds to IF-3.</text>
</comment>
<comment type="similarity">
    <text evidence="1">Belongs to the universal ribosomal protein uS11 family.</text>
</comment>
<sequence length="129" mass="13845">MARKQQTRKRRVKKNIESGIAHIRSTFNNTIVTITDMQGNAVSWSSAGALGFRGSRKSTPFAAQMAAETAAKTSLEHGLKTLEVTVKGPGAGREAAIRALQAAGLEVTAIKDVTPVPHNGCRPPKRRRV</sequence>
<feature type="chain" id="PRO_1000141107" description="Small ribosomal subunit protein uS11">
    <location>
        <begin position="1"/>
        <end position="129"/>
    </location>
</feature>
<accession>B1HMV6</accession>